<dbReference type="EC" id="2.6.1.39"/>
<dbReference type="EMBL" id="AE017221">
    <property type="protein sequence ID" value="AAS80391.1"/>
    <property type="molecule type" value="Genomic_DNA"/>
</dbReference>
<dbReference type="RefSeq" id="WP_011172501.1">
    <property type="nucleotide sequence ID" value="NC_005835.1"/>
</dbReference>
<dbReference type="PDB" id="2EGY">
    <property type="method" value="X-ray"/>
    <property type="resolution" value="2.67 A"/>
    <property type="chains" value="A/B/C/D=1-397"/>
</dbReference>
<dbReference type="PDB" id="2Z1Y">
    <property type="method" value="X-ray"/>
    <property type="resolution" value="1.75 A"/>
    <property type="chains" value="A/B=1-397"/>
</dbReference>
<dbReference type="PDB" id="2ZP7">
    <property type="method" value="X-ray"/>
    <property type="resolution" value="2.26 A"/>
    <property type="chains" value="A/B/C/D/E/F=1-397"/>
</dbReference>
<dbReference type="PDB" id="2ZYJ">
    <property type="method" value="X-ray"/>
    <property type="resolution" value="1.67 A"/>
    <property type="chains" value="A/B=1-397"/>
</dbReference>
<dbReference type="PDB" id="3CBF">
    <property type="method" value="X-ray"/>
    <property type="resolution" value="1.67 A"/>
    <property type="chains" value="A/B=1-397"/>
</dbReference>
<dbReference type="PDBsum" id="2EGY"/>
<dbReference type="PDBsum" id="2Z1Y"/>
<dbReference type="PDBsum" id="2ZP7"/>
<dbReference type="PDBsum" id="2ZYJ"/>
<dbReference type="PDBsum" id="3CBF"/>
<dbReference type="SMR" id="Q72LL6"/>
<dbReference type="KEGG" id="tth:TT_C0043"/>
<dbReference type="eggNOG" id="COG1167">
    <property type="taxonomic scope" value="Bacteria"/>
</dbReference>
<dbReference type="HOGENOM" id="CLU_017584_0_6_0"/>
<dbReference type="OrthoDB" id="9808770at2"/>
<dbReference type="BRENDA" id="2.6.1.39">
    <property type="organism ID" value="2305"/>
</dbReference>
<dbReference type="SABIO-RK" id="Q72LL6"/>
<dbReference type="UniPathway" id="UPA00033">
    <property type="reaction ID" value="UER00031"/>
</dbReference>
<dbReference type="EvolutionaryTrace" id="Q72LL6"/>
<dbReference type="Proteomes" id="UP000000592">
    <property type="component" value="Chromosome"/>
</dbReference>
<dbReference type="GO" id="GO:0047536">
    <property type="term" value="F:2-aminoadipate transaminase activity"/>
    <property type="evidence" value="ECO:0007669"/>
    <property type="project" value="UniProtKB-EC"/>
</dbReference>
<dbReference type="GO" id="GO:0030170">
    <property type="term" value="F:pyridoxal phosphate binding"/>
    <property type="evidence" value="ECO:0007669"/>
    <property type="project" value="InterPro"/>
</dbReference>
<dbReference type="GO" id="GO:0019878">
    <property type="term" value="P:lysine biosynthetic process via aminoadipic acid"/>
    <property type="evidence" value="ECO:0007669"/>
    <property type="project" value="UniProtKB-UniPathway"/>
</dbReference>
<dbReference type="CDD" id="cd00609">
    <property type="entry name" value="AAT_like"/>
    <property type="match status" value="1"/>
</dbReference>
<dbReference type="FunFam" id="3.40.640.10:FF:000053">
    <property type="entry name" value="Aminotransferase, class I"/>
    <property type="match status" value="1"/>
</dbReference>
<dbReference type="Gene3D" id="3.90.1150.10">
    <property type="entry name" value="Aspartate Aminotransferase, domain 1"/>
    <property type="match status" value="1"/>
</dbReference>
<dbReference type="Gene3D" id="3.40.640.10">
    <property type="entry name" value="Type I PLP-dependent aspartate aminotransferase-like (Major domain)"/>
    <property type="match status" value="1"/>
</dbReference>
<dbReference type="InterPro" id="IPR004839">
    <property type="entry name" value="Aminotransferase_I/II_large"/>
</dbReference>
<dbReference type="InterPro" id="IPR050859">
    <property type="entry name" value="Class-I_PLP-dep_aminotransf"/>
</dbReference>
<dbReference type="InterPro" id="IPR015424">
    <property type="entry name" value="PyrdxlP-dep_Trfase"/>
</dbReference>
<dbReference type="InterPro" id="IPR015421">
    <property type="entry name" value="PyrdxlP-dep_Trfase_major"/>
</dbReference>
<dbReference type="InterPro" id="IPR015422">
    <property type="entry name" value="PyrdxlP-dep_Trfase_small"/>
</dbReference>
<dbReference type="PANTHER" id="PTHR42790">
    <property type="entry name" value="AMINOTRANSFERASE"/>
    <property type="match status" value="1"/>
</dbReference>
<dbReference type="PANTHER" id="PTHR42790:SF19">
    <property type="entry name" value="KYNURENINE_ALPHA-AMINOADIPATE AMINOTRANSFERASE, MITOCHONDRIAL"/>
    <property type="match status" value="1"/>
</dbReference>
<dbReference type="Pfam" id="PF00155">
    <property type="entry name" value="Aminotran_1_2"/>
    <property type="match status" value="1"/>
</dbReference>
<dbReference type="SUPFAM" id="SSF53383">
    <property type="entry name" value="PLP-dependent transferases"/>
    <property type="match status" value="1"/>
</dbReference>
<proteinExistence type="evidence at protein level"/>
<accession>Q72LL6</accession>
<keyword id="KW-0002">3D-structure</keyword>
<keyword id="KW-0032">Aminotransferase</keyword>
<keyword id="KW-0663">Pyridoxal phosphate</keyword>
<keyword id="KW-0808">Transferase</keyword>
<name>LYSN_THET2</name>
<organism>
    <name type="scientific">Thermus thermophilus (strain ATCC BAA-163 / DSM 7039 / HB27)</name>
    <dbReference type="NCBI Taxonomy" id="262724"/>
    <lineage>
        <taxon>Bacteria</taxon>
        <taxon>Thermotogati</taxon>
        <taxon>Deinococcota</taxon>
        <taxon>Deinococci</taxon>
        <taxon>Thermales</taxon>
        <taxon>Thermaceae</taxon>
        <taxon>Thermus</taxon>
    </lineage>
</organism>
<evidence type="ECO:0000250" key="1"/>
<evidence type="ECO:0000269" key="2">
    <source>
    </source>
</evidence>
<evidence type="ECO:0000269" key="3">
    <source>
    </source>
</evidence>
<evidence type="ECO:0000269" key="4">
    <source>
    </source>
</evidence>
<evidence type="ECO:0000269" key="5">
    <source ref="5"/>
</evidence>
<evidence type="ECO:0000305" key="6"/>
<evidence type="ECO:0007829" key="7">
    <source>
        <dbReference type="PDB" id="2ZP7"/>
    </source>
</evidence>
<evidence type="ECO:0007829" key="8">
    <source>
        <dbReference type="PDB" id="2ZYJ"/>
    </source>
</evidence>
<comment type="function">
    <text evidence="2">Catalyzes the transfer of an amino group between 2-oxoadipate (2-OA) and glutamate (Glu) to yield alpha-aminodipate (AAA). It can also transaminate glutamate, leucine, and aromatic amino acids. It also contributes in the biosynthesis of other amino acids such as leucine.</text>
</comment>
<comment type="catalytic activity">
    <reaction evidence="2">
        <text>L-2-aminoadipate + 2-oxoglutarate = 2-oxoadipate + L-glutamate</text>
        <dbReference type="Rhea" id="RHEA:12601"/>
        <dbReference type="ChEBI" id="CHEBI:16810"/>
        <dbReference type="ChEBI" id="CHEBI:29985"/>
        <dbReference type="ChEBI" id="CHEBI:57499"/>
        <dbReference type="ChEBI" id="CHEBI:58672"/>
        <dbReference type="EC" id="2.6.1.39"/>
    </reaction>
</comment>
<comment type="cofactor">
    <cofactor>
        <name>pyridoxal 5'-phosphate</name>
        <dbReference type="ChEBI" id="CHEBI:597326"/>
    </cofactor>
</comment>
<comment type="biophysicochemical properties">
    <kinetics>
        <KM evidence="2 4">13.3 uM for 2-oxoisovalerate (at 45 degrees Celsius and pH 7.5)</KM>
        <KM evidence="2 4">24.2 uM for 2-oxoadipate (at 45 degrees Celsius and pH 7.5)</KM>
        <KM evidence="2 4">28.8 uM for 2-oxoisocaproate (at 45 degrees Celsius and pH 7.5)</KM>
        <KM evidence="2 4">148.3 uM for 2-oxo-3-methylvalerate (at 45 degrees Celsius and pH 7.5)</KM>
        <KM evidence="2 4">300 uM for 2-oxoglutarate (at 45 degrees Celsius and pH 8.0)</KM>
        <KM evidence="2 4">460 uM for glutamate (at 45 degrees Celsius and pH 8.0)</KM>
        <KM evidence="2 4">810 uM for alpha-aminodipate (at 45 degrees Celsius and pH 8.0)</KM>
        <KM evidence="2 4">950 uM for leucine (at 45 degrees Celsius and pH 8.0)</KM>
        <KM evidence="2 4">381 mM for aspartate (with 1 mM of 2-oxoglutarate at 45 degrees Celsius and pH 8.0)</KM>
    </kinetics>
</comment>
<comment type="pathway">
    <text>Amino-acid biosynthesis; L-lysine biosynthesis via AAA pathway; L-alpha-aminoadipate from 2-oxoglutarate: step 5/5.</text>
</comment>
<comment type="subunit">
    <text evidence="2 3 4 5">Homodimer.</text>
</comment>
<comment type="miscellaneous">
    <text>Catalysis proceeds by a classical ping-pong bi-bi reaction mechanism.</text>
</comment>
<comment type="similarity">
    <text evidence="6">Belongs to the class-I pyridoxal-phosphate-dependent aminotransferase family.</text>
</comment>
<sequence>MKPLSWSEAFGKGAGRIQASTIRELLKLTQRPGILSFAGGLPAPELFPKEEAAEAAARILREKGEVALQYSPTEGYAPLRAFVAEWIGVRPEEVLITTGSQQALDLVGKVFLDEGSPVLLEAPSYMGAIQAFRLQGPRFLTVPAGEEGPDLDALEEVLKRERPRFLYLIPSFQNPTGGLTPLPARKRLLQMVMERGLVVVEDDAYRELYFGEARLPSLFELAREAGYPGVIYLGSFSKVLSPGLRVAFAVAHPEALQKLVQAKQGADLHTPMLNQMLVHELLKEGFSERLERVRRVYREKAQAMLHALDREVPKEVRYTRPKGGMFVWMELPKGLSAEGLFRRALEENVAFVPGGPFFANGGGENTLRLSYATLDREGIAEGVRRLGRALKGLLALV</sequence>
<protein>
    <recommendedName>
        <fullName>2-aminoadipate transaminase</fullName>
        <ecNumber>2.6.1.39</ecNumber>
    </recommendedName>
    <alternativeName>
        <fullName>2-aminoadipate aminotransferase</fullName>
    </alternativeName>
    <alternativeName>
        <fullName>Alpha-aminoadipate aminotransferase</fullName>
        <shortName>AAA-AT</shortName>
        <shortName>AadAT</shortName>
    </alternativeName>
</protein>
<feature type="chain" id="PRO_0000389636" description="2-aminoadipate transaminase">
    <location>
        <begin position="1"/>
        <end position="397"/>
    </location>
</feature>
<feature type="binding site" evidence="3 4">
    <location>
        <position position="40"/>
    </location>
    <ligand>
        <name>substrate</name>
    </ligand>
</feature>
<feature type="binding site" evidence="5">
    <location>
        <position position="70"/>
    </location>
    <ligand>
        <name>pyridoxal 5'-phosphate</name>
        <dbReference type="ChEBI" id="CHEBI:597326"/>
    </ligand>
</feature>
<feature type="binding site">
    <location>
        <begin position="100"/>
        <end position="101"/>
    </location>
    <ligand>
        <name>pyridoxal 5'-phosphate</name>
        <dbReference type="ChEBI" id="CHEBI:597326"/>
    </ligand>
</feature>
<feature type="binding site" evidence="5">
    <location>
        <position position="174"/>
    </location>
    <ligand>
        <name>pyridoxal 5'-phosphate</name>
        <dbReference type="ChEBI" id="CHEBI:597326"/>
    </ligand>
</feature>
<feature type="binding site" evidence="3 4">
    <location>
        <position position="174"/>
    </location>
    <ligand>
        <name>substrate</name>
    </ligand>
</feature>
<feature type="binding site">
    <location>
        <begin position="202"/>
        <end position="205"/>
    </location>
    <ligand>
        <name>pyridoxal 5'-phosphate</name>
        <dbReference type="ChEBI" id="CHEBI:597326"/>
    </ligand>
</feature>
<feature type="binding site">
    <location>
        <begin position="235"/>
        <end position="237"/>
    </location>
    <ligand>
        <name>pyridoxal 5'-phosphate</name>
        <dbReference type="ChEBI" id="CHEBI:597326"/>
    </ligand>
</feature>
<feature type="binding site" evidence="5">
    <location>
        <position position="245"/>
    </location>
    <ligand>
        <name>pyridoxal 5'-phosphate</name>
        <dbReference type="ChEBI" id="CHEBI:597326"/>
    </ligand>
</feature>
<feature type="binding site" evidence="3 4">
    <location>
        <position position="368"/>
    </location>
    <ligand>
        <name>substrate</name>
    </ligand>
</feature>
<feature type="site" description="Recognizes the side-chain carboxyl group of acidic compounds">
    <location>
        <position position="23"/>
    </location>
</feature>
<feature type="modified residue" description="N6-(pyridoxal phosphate)lysine" evidence="1">
    <location>
        <position position="263"/>
    </location>
</feature>
<feature type="mutagenesis site" description="Strongly decreases the affinity for AAA and Glu. A mild decrease of affinity is observed for 2-oxoglutarate. Increases the affinity for leucine and 2-oxoisocaproate." evidence="4">
    <original>S</original>
    <variation>E</variation>
    <location>
        <position position="20"/>
    </location>
</feature>
<feature type="mutagenesis site" description="Strongly decreases the affinity for AAA and Glu. A mild decrease of affinity is observed for 2-oxoglutarate which has the same chain length as Glu, but differs by the presence of a 2-oxo group which is not recognized by R-23. Increases the affinity for leucine and 2-oxoisocaproate due to the absence of gamma-carboxyl group." evidence="4">
    <original>R</original>
    <variation>A</variation>
    <location>
        <position position="23"/>
    </location>
</feature>
<feature type="mutagenesis site" description="Strongly decreases the affinity for AAA and Glu. A mild decrease of affinity is observed for 2-oxoglutarate which has the same chain length as Glu, but differs by the presence of a 2-oxo group which is not recognized by R-23. Increases the affinity for leucine and 2-oxoisocaproate due to the absence of gamma-carboxyl group." evidence="4">
    <original>R</original>
    <variation>Q</variation>
    <location>
        <position position="23"/>
    </location>
</feature>
<feature type="helix" evidence="8">
    <location>
        <begin position="6"/>
        <end position="9"/>
    </location>
</feature>
<feature type="helix" evidence="8">
    <location>
        <begin position="12"/>
        <end position="16"/>
    </location>
</feature>
<feature type="helix" evidence="8">
    <location>
        <begin position="21"/>
        <end position="29"/>
    </location>
</feature>
<feature type="strand" evidence="8">
    <location>
        <begin position="35"/>
        <end position="39"/>
    </location>
</feature>
<feature type="helix" evidence="8">
    <location>
        <begin position="44"/>
        <end position="46"/>
    </location>
</feature>
<feature type="helix" evidence="8">
    <location>
        <begin position="49"/>
        <end position="67"/>
    </location>
</feature>
<feature type="helix" evidence="8">
    <location>
        <begin position="77"/>
        <end position="87"/>
    </location>
</feature>
<feature type="helix" evidence="8">
    <location>
        <begin position="91"/>
        <end position="93"/>
    </location>
</feature>
<feature type="strand" evidence="8">
    <location>
        <begin position="94"/>
        <end position="98"/>
    </location>
</feature>
<feature type="helix" evidence="8">
    <location>
        <begin position="99"/>
        <end position="111"/>
    </location>
</feature>
<feature type="strand" evidence="8">
    <location>
        <begin position="117"/>
        <end position="123"/>
    </location>
</feature>
<feature type="helix" evidence="8">
    <location>
        <begin position="126"/>
        <end position="133"/>
    </location>
</feature>
<feature type="strand" evidence="8">
    <location>
        <begin position="138"/>
        <end position="145"/>
    </location>
</feature>
<feature type="helix" evidence="8">
    <location>
        <begin position="151"/>
        <end position="160"/>
    </location>
</feature>
<feature type="strand" evidence="8">
    <location>
        <begin position="166"/>
        <end position="168"/>
    </location>
</feature>
<feature type="turn" evidence="8">
    <location>
        <begin position="174"/>
        <end position="176"/>
    </location>
</feature>
<feature type="helix" evidence="8">
    <location>
        <begin position="182"/>
        <end position="195"/>
    </location>
</feature>
<feature type="strand" evidence="8">
    <location>
        <begin position="199"/>
        <end position="202"/>
    </location>
</feature>
<feature type="turn" evidence="8">
    <location>
        <begin position="204"/>
        <end position="207"/>
    </location>
</feature>
<feature type="strand" evidence="7">
    <location>
        <begin position="211"/>
        <end position="213"/>
    </location>
</feature>
<feature type="helix" evidence="8">
    <location>
        <begin position="218"/>
        <end position="225"/>
    </location>
</feature>
<feature type="strand" evidence="8">
    <location>
        <begin position="230"/>
        <end position="236"/>
    </location>
</feature>
<feature type="turn" evidence="8">
    <location>
        <begin position="237"/>
        <end position="240"/>
    </location>
</feature>
<feature type="helix" evidence="8">
    <location>
        <begin position="242"/>
        <end position="244"/>
    </location>
</feature>
<feature type="strand" evidence="8">
    <location>
        <begin position="247"/>
        <end position="250"/>
    </location>
</feature>
<feature type="helix" evidence="8">
    <location>
        <begin position="253"/>
        <end position="267"/>
    </location>
</feature>
<feature type="helix" evidence="8">
    <location>
        <begin position="272"/>
        <end position="282"/>
    </location>
</feature>
<feature type="turn" evidence="8">
    <location>
        <begin position="283"/>
        <end position="285"/>
    </location>
</feature>
<feature type="helix" evidence="8">
    <location>
        <begin position="286"/>
        <end position="311"/>
    </location>
</feature>
<feature type="strand" evidence="8">
    <location>
        <begin position="316"/>
        <end position="318"/>
    </location>
</feature>
<feature type="strand" evidence="8">
    <location>
        <begin position="322"/>
        <end position="330"/>
    </location>
</feature>
<feature type="helix" evidence="8">
    <location>
        <begin position="337"/>
        <end position="346"/>
    </location>
</feature>
<feature type="strand" evidence="8">
    <location>
        <begin position="349"/>
        <end position="354"/>
    </location>
</feature>
<feature type="helix" evidence="8">
    <location>
        <begin position="355"/>
        <end position="357"/>
    </location>
</feature>
<feature type="strand" evidence="8">
    <location>
        <begin position="366"/>
        <end position="370"/>
    </location>
</feature>
<feature type="strand" evidence="8">
    <location>
        <begin position="372"/>
        <end position="374"/>
    </location>
</feature>
<feature type="helix" evidence="8">
    <location>
        <begin position="376"/>
        <end position="396"/>
    </location>
</feature>
<gene>
    <name type="primary">lysN</name>
    <name type="ordered locus">TT_C0043</name>
</gene>
<reference key="1">
    <citation type="journal article" date="2004" name="Nat. Biotechnol.">
        <title>The genome sequence of the extreme thermophile Thermus thermophilus.</title>
        <authorList>
            <person name="Henne A."/>
            <person name="Brueggemann H."/>
            <person name="Raasch C."/>
            <person name="Wiezer A."/>
            <person name="Hartsch T."/>
            <person name="Liesegang H."/>
            <person name="Johann A."/>
            <person name="Lienard T."/>
            <person name="Gohl O."/>
            <person name="Martinez-Arias R."/>
            <person name="Jacobi C."/>
            <person name="Starkuviene V."/>
            <person name="Schlenczeck S."/>
            <person name="Dencker S."/>
            <person name="Huber R."/>
            <person name="Klenk H.-P."/>
            <person name="Kramer W."/>
            <person name="Merkl R."/>
            <person name="Gottschalk G."/>
            <person name="Fritz H.-J."/>
        </authorList>
    </citation>
    <scope>NUCLEOTIDE SEQUENCE [LARGE SCALE GENOMIC DNA]</scope>
    <source>
        <strain>ATCC BAA-163 / DSM 7039 / HB27</strain>
    </source>
</reference>
<reference key="2">
    <citation type="journal article" date="2004" name="Microbiology">
        <title>alpha-Aminoadipate aminotransferase from an extremely thermophilic bacterium, Thermus thermophilus.</title>
        <authorList>
            <person name="Miyazaki T."/>
            <person name="Miyazaki J."/>
            <person name="Yamane H."/>
            <person name="Nishiyama M."/>
        </authorList>
    </citation>
    <scope>FUNCTION</scope>
    <scope>CATALYTIC ACTIVITY</scope>
    <scope>SUBUNIT</scope>
    <scope>SUBSTRATE SPECIFICITY</scope>
    <scope>BIOPHYSICOCHEMICAL PROPERTIES</scope>
    <scope>NOMENCLATURE</scope>
</reference>
<reference key="3">
    <citation type="journal article" date="2009" name="Biochem. Biophys. Res. Commun.">
        <title>Dual roles of a conserved pair, Arg23 and Ser20, in recognition of multiple substrates in alpha-aminoadipate aminotransferase from Thermus thermophilus.</title>
        <authorList>
            <person name="Ouchi T."/>
            <person name="Tomita T."/>
            <person name="Miyagawa T."/>
            <person name="Kuzuyama T."/>
            <person name="Nishiyama M."/>
        </authorList>
    </citation>
    <scope>X-RAY CRYSTALLOGRAPHY (1.67 ANGSTROMS) IN COMPLEX WITH SUBSTRATE</scope>
    <scope>MUTAGENESIS OF SER-20 AND ARG-23</scope>
    <scope>BIOPHYSICOCHEMICAL PROPERTIES</scope>
</reference>
<reference key="4">
    <citation type="journal article" date="2009" name="Proteins">
        <title>Mechanism for multiple-substrates recognition of alpha-aminoadipate aminotransferase from Thermus thermophilus.</title>
        <authorList>
            <person name="Tomita T."/>
            <person name="Miyagawa T."/>
            <person name="Miyazaki T."/>
            <person name="Fushinobu S."/>
            <person name="Kuzuyama T."/>
            <person name="Nishiyama M."/>
        </authorList>
    </citation>
    <scope>X-RAY CRYSTALLOGRAPHY (2.26 ANGSTROMS) IN COMPLEX WITH SUBSTRATE</scope>
    <scope>SUBUNIT</scope>
</reference>
<reference key="5">
    <citation type="submission" date="2009-02" db="PDB data bank">
        <title>Crystal structure of lysN, alpha-aminoadipate aminotransferase, from Thermus thermophilus HB27.</title>
        <authorList>
            <person name="Tomita T."/>
            <person name="Miyazaki T."/>
            <person name="Miyagawa T."/>
            <person name="Fushinobu S."/>
            <person name="Kuzuyama T."/>
            <person name="Nishiyama M."/>
        </authorList>
    </citation>
    <scope>X-RAY CRYSTALLOGRAPHY (2.67 ANGSTROMS) IN COMPLEX WITH PYRIDOXAL PHOSPHATE</scope>
</reference>